<proteinExistence type="evidence at transcript level"/>
<accession>Q03282</accession>
<keyword id="KW-0963">Cytoplasm</keyword>
<keyword id="KW-0378">Hydrolase</keyword>
<keyword id="KW-0614">Plasmid</keyword>
<organism>
    <name type="scientific">Escherichia coli</name>
    <dbReference type="NCBI Taxonomy" id="562"/>
    <lineage>
        <taxon>Bacteria</taxon>
        <taxon>Pseudomonadati</taxon>
        <taxon>Pseudomonadota</taxon>
        <taxon>Gammaproteobacteria</taxon>
        <taxon>Enterobacterales</taxon>
        <taxon>Enterobacteriaceae</taxon>
        <taxon>Escherichia</taxon>
    </lineage>
</organism>
<reference key="1">
    <citation type="journal article" date="1993" name="J. Bacteriol.">
        <title>Characterization of a plasmid-encoded urease gene cluster found in members of the family Enterobacteriaceae.</title>
        <authorList>
            <person name="D'Orazio S.E."/>
            <person name="Collins C.M."/>
        </authorList>
    </citation>
    <scope>NUCLEOTIDE SEQUENCE [GENOMIC DNA]</scope>
    <scope>INDUCTION</scope>
    <source>
        <strain>1440 / UPEC</strain>
    </source>
</reference>
<protein>
    <recommendedName>
        <fullName evidence="1">Urease subunit gamma</fullName>
        <ecNumber evidence="1">3.5.1.5</ecNumber>
    </recommendedName>
    <alternativeName>
        <fullName evidence="1">Urea amidohydrolase subunit gamma</fullName>
    </alternativeName>
</protein>
<dbReference type="EC" id="3.5.1.5" evidence="1"/>
<dbReference type="EMBL" id="L03307">
    <property type="protein sequence ID" value="AAA24745.1"/>
    <property type="molecule type" value="Genomic_DNA"/>
</dbReference>
<dbReference type="PIR" id="B47090">
    <property type="entry name" value="B47090"/>
</dbReference>
<dbReference type="SMR" id="Q03282"/>
<dbReference type="BindingDB" id="Q03282"/>
<dbReference type="ChEMBL" id="CHEMBL2364683"/>
<dbReference type="DrugCentral" id="Q03282"/>
<dbReference type="UniPathway" id="UPA00258">
    <property type="reaction ID" value="UER00370"/>
</dbReference>
<dbReference type="GO" id="GO:0005737">
    <property type="term" value="C:cytoplasm"/>
    <property type="evidence" value="ECO:0007669"/>
    <property type="project" value="UniProtKB-SubCell"/>
</dbReference>
<dbReference type="GO" id="GO:0016151">
    <property type="term" value="F:nickel cation binding"/>
    <property type="evidence" value="ECO:0007669"/>
    <property type="project" value="InterPro"/>
</dbReference>
<dbReference type="GO" id="GO:0009039">
    <property type="term" value="F:urease activity"/>
    <property type="evidence" value="ECO:0007669"/>
    <property type="project" value="UniProtKB-UniRule"/>
</dbReference>
<dbReference type="GO" id="GO:0043419">
    <property type="term" value="P:urea catabolic process"/>
    <property type="evidence" value="ECO:0007669"/>
    <property type="project" value="UniProtKB-UniRule"/>
</dbReference>
<dbReference type="CDD" id="cd00390">
    <property type="entry name" value="Urease_gamma"/>
    <property type="match status" value="1"/>
</dbReference>
<dbReference type="Gene3D" id="3.30.280.10">
    <property type="entry name" value="Urease, gamma-like subunit"/>
    <property type="match status" value="1"/>
</dbReference>
<dbReference type="HAMAP" id="MF_00739">
    <property type="entry name" value="Urease_gamma"/>
    <property type="match status" value="1"/>
</dbReference>
<dbReference type="InterPro" id="IPR012010">
    <property type="entry name" value="Urease_gamma"/>
</dbReference>
<dbReference type="InterPro" id="IPR002026">
    <property type="entry name" value="Urease_gamma/gamma-beta_su"/>
</dbReference>
<dbReference type="InterPro" id="IPR036463">
    <property type="entry name" value="Urease_gamma_sf"/>
</dbReference>
<dbReference type="InterPro" id="IPR050069">
    <property type="entry name" value="Urease_subunit"/>
</dbReference>
<dbReference type="NCBIfam" id="NF009712">
    <property type="entry name" value="PRK13241.1"/>
    <property type="match status" value="1"/>
</dbReference>
<dbReference type="NCBIfam" id="TIGR00193">
    <property type="entry name" value="urease_gam"/>
    <property type="match status" value="1"/>
</dbReference>
<dbReference type="PANTHER" id="PTHR33569">
    <property type="entry name" value="UREASE"/>
    <property type="match status" value="1"/>
</dbReference>
<dbReference type="PANTHER" id="PTHR33569:SF1">
    <property type="entry name" value="UREASE"/>
    <property type="match status" value="1"/>
</dbReference>
<dbReference type="Pfam" id="PF00547">
    <property type="entry name" value="Urease_gamma"/>
    <property type="match status" value="1"/>
</dbReference>
<dbReference type="PIRSF" id="PIRSF001223">
    <property type="entry name" value="Urease_gamma"/>
    <property type="match status" value="1"/>
</dbReference>
<dbReference type="SUPFAM" id="SSF54111">
    <property type="entry name" value="Urease, gamma-subunit"/>
    <property type="match status" value="1"/>
</dbReference>
<gene>
    <name evidence="1" type="primary">ureA</name>
</gene>
<evidence type="ECO:0000255" key="1">
    <source>
        <dbReference type="HAMAP-Rule" id="MF_00739"/>
    </source>
</evidence>
<evidence type="ECO:0000269" key="2">
    <source>
    </source>
</evidence>
<feature type="chain" id="PRO_0000098012" description="Urease subunit gamma">
    <location>
        <begin position="1"/>
        <end position="100"/>
    </location>
</feature>
<comment type="catalytic activity">
    <reaction evidence="1">
        <text>urea + 2 H2O + H(+) = hydrogencarbonate + 2 NH4(+)</text>
        <dbReference type="Rhea" id="RHEA:20557"/>
        <dbReference type="ChEBI" id="CHEBI:15377"/>
        <dbReference type="ChEBI" id="CHEBI:15378"/>
        <dbReference type="ChEBI" id="CHEBI:16199"/>
        <dbReference type="ChEBI" id="CHEBI:17544"/>
        <dbReference type="ChEBI" id="CHEBI:28938"/>
        <dbReference type="EC" id="3.5.1.5"/>
    </reaction>
</comment>
<comment type="pathway">
    <text evidence="1">Nitrogen metabolism; urea degradation; CO(2) and NH(3) from urea (urease route): step 1/1.</text>
</comment>
<comment type="subunit">
    <text evidence="1">Heterotrimer of UreA (gamma), UreB (beta) and UreC (alpha) subunits. Three heterotrimers associate to form the active enzyme.</text>
</comment>
<comment type="subcellular location">
    <subcellularLocation>
        <location evidence="1">Cytoplasm</location>
    </subcellularLocation>
</comment>
<comment type="induction">
    <text evidence="2">The probable operon is induced by urea.</text>
</comment>
<comment type="similarity">
    <text evidence="1">Belongs to the urease gamma subunit family.</text>
</comment>
<name>URE3_ECOLX</name>
<geneLocation type="plasmid"/>
<sequence>MELTPREKDKLLLFTAGLVAERRLARGLKLNYPEAVALISCAIMEGARDGKTVAQLMSEGRTLLTAEQVMEGVPEMIKDIQVECTFPDGTKLVSIHDPIV</sequence>